<comment type="function">
    <text evidence="1">Catalyzes the NADPH-dependent reduction of L-glutamate 5-phosphate into L-glutamate 5-semialdehyde and phosphate. The product spontaneously undergoes cyclization to form 1-pyrroline-5-carboxylate.</text>
</comment>
<comment type="catalytic activity">
    <reaction evidence="1">
        <text>L-glutamate 5-semialdehyde + phosphate + NADP(+) = L-glutamyl 5-phosphate + NADPH + H(+)</text>
        <dbReference type="Rhea" id="RHEA:19541"/>
        <dbReference type="ChEBI" id="CHEBI:15378"/>
        <dbReference type="ChEBI" id="CHEBI:43474"/>
        <dbReference type="ChEBI" id="CHEBI:57783"/>
        <dbReference type="ChEBI" id="CHEBI:58066"/>
        <dbReference type="ChEBI" id="CHEBI:58274"/>
        <dbReference type="ChEBI" id="CHEBI:58349"/>
        <dbReference type="EC" id="1.2.1.41"/>
    </reaction>
</comment>
<comment type="pathway">
    <text evidence="1">Amino-acid biosynthesis; L-proline biosynthesis; L-glutamate 5-semialdehyde from L-glutamate: step 2/2.</text>
</comment>
<comment type="subcellular location">
    <subcellularLocation>
        <location evidence="1">Cytoplasm</location>
    </subcellularLocation>
</comment>
<comment type="similarity">
    <text evidence="1">Belongs to the gamma-glutamyl phosphate reductase family.</text>
</comment>
<reference key="1">
    <citation type="journal article" date="2008" name="Environ. Microbiol.">
        <title>The genome of Erwinia tasmaniensis strain Et1/99, a non-pathogenic bacterium in the genus Erwinia.</title>
        <authorList>
            <person name="Kube M."/>
            <person name="Migdoll A.M."/>
            <person name="Mueller I."/>
            <person name="Kuhl H."/>
            <person name="Beck A."/>
            <person name="Reinhardt R."/>
            <person name="Geider K."/>
        </authorList>
    </citation>
    <scope>NUCLEOTIDE SEQUENCE [LARGE SCALE GENOMIC DNA]</scope>
    <source>
        <strain>DSM 17950 / CFBP 7177 / CIP 109463 / NCPPB 4357 / Et1/99</strain>
    </source>
</reference>
<name>PROA_ERWT9</name>
<gene>
    <name evidence="1" type="primary">proA</name>
    <name type="ordered locus">ETA_25930</name>
</gene>
<protein>
    <recommendedName>
        <fullName evidence="1">Gamma-glutamyl phosphate reductase</fullName>
        <shortName evidence="1">GPR</shortName>
        <ecNumber evidence="1">1.2.1.41</ecNumber>
    </recommendedName>
    <alternativeName>
        <fullName evidence="1">Glutamate-5-semialdehyde dehydrogenase</fullName>
    </alternativeName>
    <alternativeName>
        <fullName evidence="1">Glutamyl-gamma-semialdehyde dehydrogenase</fullName>
        <shortName evidence="1">GSA dehydrogenase</shortName>
    </alternativeName>
</protein>
<dbReference type="EC" id="1.2.1.41" evidence="1"/>
<dbReference type="EMBL" id="CU468135">
    <property type="protein sequence ID" value="CAO97639.1"/>
    <property type="molecule type" value="Genomic_DNA"/>
</dbReference>
<dbReference type="RefSeq" id="WP_012442304.1">
    <property type="nucleotide sequence ID" value="NC_010694.1"/>
</dbReference>
<dbReference type="SMR" id="B2VHM6"/>
<dbReference type="STRING" id="465817.ETA_25930"/>
<dbReference type="KEGG" id="eta:ETA_25930"/>
<dbReference type="eggNOG" id="COG0014">
    <property type="taxonomic scope" value="Bacteria"/>
</dbReference>
<dbReference type="HOGENOM" id="CLU_030231_0_0_6"/>
<dbReference type="OrthoDB" id="9809970at2"/>
<dbReference type="UniPathway" id="UPA00098">
    <property type="reaction ID" value="UER00360"/>
</dbReference>
<dbReference type="Proteomes" id="UP000001726">
    <property type="component" value="Chromosome"/>
</dbReference>
<dbReference type="GO" id="GO:0005737">
    <property type="term" value="C:cytoplasm"/>
    <property type="evidence" value="ECO:0007669"/>
    <property type="project" value="UniProtKB-SubCell"/>
</dbReference>
<dbReference type="GO" id="GO:0004350">
    <property type="term" value="F:glutamate-5-semialdehyde dehydrogenase activity"/>
    <property type="evidence" value="ECO:0007669"/>
    <property type="project" value="UniProtKB-UniRule"/>
</dbReference>
<dbReference type="GO" id="GO:0050661">
    <property type="term" value="F:NADP binding"/>
    <property type="evidence" value="ECO:0007669"/>
    <property type="project" value="InterPro"/>
</dbReference>
<dbReference type="GO" id="GO:0055129">
    <property type="term" value="P:L-proline biosynthetic process"/>
    <property type="evidence" value="ECO:0007669"/>
    <property type="project" value="UniProtKB-UniRule"/>
</dbReference>
<dbReference type="CDD" id="cd07079">
    <property type="entry name" value="ALDH_F18-19_ProA-GPR"/>
    <property type="match status" value="1"/>
</dbReference>
<dbReference type="FunFam" id="3.40.309.10:FF:000006">
    <property type="entry name" value="Gamma-glutamyl phosphate reductase"/>
    <property type="match status" value="1"/>
</dbReference>
<dbReference type="Gene3D" id="3.40.605.10">
    <property type="entry name" value="Aldehyde Dehydrogenase, Chain A, domain 1"/>
    <property type="match status" value="1"/>
</dbReference>
<dbReference type="Gene3D" id="3.40.309.10">
    <property type="entry name" value="Aldehyde Dehydrogenase, Chain A, domain 2"/>
    <property type="match status" value="1"/>
</dbReference>
<dbReference type="HAMAP" id="MF_00412">
    <property type="entry name" value="ProA"/>
    <property type="match status" value="1"/>
</dbReference>
<dbReference type="InterPro" id="IPR016161">
    <property type="entry name" value="Ald_DH/histidinol_DH"/>
</dbReference>
<dbReference type="InterPro" id="IPR016163">
    <property type="entry name" value="Ald_DH_C"/>
</dbReference>
<dbReference type="InterPro" id="IPR016162">
    <property type="entry name" value="Ald_DH_N"/>
</dbReference>
<dbReference type="InterPro" id="IPR015590">
    <property type="entry name" value="Aldehyde_DH_dom"/>
</dbReference>
<dbReference type="InterPro" id="IPR012134">
    <property type="entry name" value="Glu-5-SA_DH"/>
</dbReference>
<dbReference type="InterPro" id="IPR000965">
    <property type="entry name" value="GPR_dom"/>
</dbReference>
<dbReference type="NCBIfam" id="NF001221">
    <property type="entry name" value="PRK00197.1"/>
    <property type="match status" value="1"/>
</dbReference>
<dbReference type="NCBIfam" id="TIGR00407">
    <property type="entry name" value="proA"/>
    <property type="match status" value="1"/>
</dbReference>
<dbReference type="PANTHER" id="PTHR11063:SF8">
    <property type="entry name" value="DELTA-1-PYRROLINE-5-CARBOXYLATE SYNTHASE"/>
    <property type="match status" value="1"/>
</dbReference>
<dbReference type="PANTHER" id="PTHR11063">
    <property type="entry name" value="GLUTAMATE SEMIALDEHYDE DEHYDROGENASE"/>
    <property type="match status" value="1"/>
</dbReference>
<dbReference type="Pfam" id="PF00171">
    <property type="entry name" value="Aldedh"/>
    <property type="match status" value="1"/>
</dbReference>
<dbReference type="PIRSF" id="PIRSF000151">
    <property type="entry name" value="GPR"/>
    <property type="match status" value="1"/>
</dbReference>
<dbReference type="SUPFAM" id="SSF53720">
    <property type="entry name" value="ALDH-like"/>
    <property type="match status" value="1"/>
</dbReference>
<feature type="chain" id="PRO_1000193601" description="Gamma-glutamyl phosphate reductase">
    <location>
        <begin position="1"/>
        <end position="417"/>
    </location>
</feature>
<evidence type="ECO:0000255" key="1">
    <source>
        <dbReference type="HAMAP-Rule" id="MF_00412"/>
    </source>
</evidence>
<keyword id="KW-0028">Amino-acid biosynthesis</keyword>
<keyword id="KW-0963">Cytoplasm</keyword>
<keyword id="KW-0521">NADP</keyword>
<keyword id="KW-0560">Oxidoreductase</keyword>
<keyword id="KW-0641">Proline biosynthesis</keyword>
<keyword id="KW-1185">Reference proteome</keyword>
<accession>B2VHM6</accession>
<proteinExistence type="inferred from homology"/>
<sequence>MLEQMGQAAKAASYQLSVLSTAEKNQLLMTIADRLEAQSAEILAANQQDLADARQNGMSAALLDRLMLDRQRLKGIADDVRQVCRLADPVGVVIDGGKLDSGLRIERRRVPLGVVGVIYEARPNVTVDVASLCLKTGNAVILRGGKETYRTNAATVRVIQDALKRHGVPAAAVQAIESPDRELVNQLLKLDRYVDMLIPRGGAGLHKLCREQSTIPVITGGIGVCHIYVDRSIEQEAALKVIVNAKKQRPSACNSVETLLIDAAIADSFLPALSARMAQEGISLHADARSLPLLQQGPACVSAVTDAQYRDEWLALDLNVKLVDDLSEGIAHIREYGTQHSDAILTRTIKHADRFVNEVDSSAVYVNASTRFTDGGQFGLGAEVAVSTQKLHARGPMGLEALTTYKWVAFGDDTVRD</sequence>
<organism>
    <name type="scientific">Erwinia tasmaniensis (strain DSM 17950 / CFBP 7177 / CIP 109463 / NCPPB 4357 / Et1/99)</name>
    <dbReference type="NCBI Taxonomy" id="465817"/>
    <lineage>
        <taxon>Bacteria</taxon>
        <taxon>Pseudomonadati</taxon>
        <taxon>Pseudomonadota</taxon>
        <taxon>Gammaproteobacteria</taxon>
        <taxon>Enterobacterales</taxon>
        <taxon>Erwiniaceae</taxon>
        <taxon>Erwinia</taxon>
    </lineage>
</organism>